<protein>
    <recommendedName>
        <fullName evidence="1">Phosphopantetheine adenylyltransferase</fullName>
        <ecNumber evidence="1">2.7.7.3</ecNumber>
    </recommendedName>
    <alternativeName>
        <fullName evidence="1">Dephospho-CoA pyrophosphorylase</fullName>
    </alternativeName>
    <alternativeName>
        <fullName evidence="1">Pantetheine-phosphate adenylyltransferase</fullName>
        <shortName evidence="1">PPAT</shortName>
    </alternativeName>
</protein>
<name>COAD_ACIET</name>
<keyword id="KW-0067">ATP-binding</keyword>
<keyword id="KW-0173">Coenzyme A biosynthesis</keyword>
<keyword id="KW-0963">Cytoplasm</keyword>
<keyword id="KW-0460">Magnesium</keyword>
<keyword id="KW-0547">Nucleotide-binding</keyword>
<keyword id="KW-0548">Nucleotidyltransferase</keyword>
<keyword id="KW-1185">Reference proteome</keyword>
<keyword id="KW-0808">Transferase</keyword>
<comment type="function">
    <text evidence="1">Reversibly transfers an adenylyl group from ATP to 4'-phosphopantetheine, yielding dephospho-CoA (dPCoA) and pyrophosphate.</text>
</comment>
<comment type="catalytic activity">
    <reaction evidence="1">
        <text>(R)-4'-phosphopantetheine + ATP + H(+) = 3'-dephospho-CoA + diphosphate</text>
        <dbReference type="Rhea" id="RHEA:19801"/>
        <dbReference type="ChEBI" id="CHEBI:15378"/>
        <dbReference type="ChEBI" id="CHEBI:30616"/>
        <dbReference type="ChEBI" id="CHEBI:33019"/>
        <dbReference type="ChEBI" id="CHEBI:57328"/>
        <dbReference type="ChEBI" id="CHEBI:61723"/>
        <dbReference type="EC" id="2.7.7.3"/>
    </reaction>
</comment>
<comment type="cofactor">
    <cofactor evidence="1">
        <name>Mg(2+)</name>
        <dbReference type="ChEBI" id="CHEBI:18420"/>
    </cofactor>
</comment>
<comment type="pathway">
    <text evidence="1">Cofactor biosynthesis; coenzyme A biosynthesis; CoA from (R)-pantothenate: step 4/5.</text>
</comment>
<comment type="subunit">
    <text evidence="1">Homohexamer.</text>
</comment>
<comment type="subcellular location">
    <subcellularLocation>
        <location evidence="1">Cytoplasm</location>
    </subcellularLocation>
</comment>
<comment type="similarity">
    <text evidence="1">Belongs to the bacterial CoaD family.</text>
</comment>
<feature type="chain" id="PRO_1000123284" description="Phosphopantetheine adenylyltransferase">
    <location>
        <begin position="1"/>
        <end position="165"/>
    </location>
</feature>
<feature type="binding site" evidence="1">
    <location>
        <begin position="11"/>
        <end position="12"/>
    </location>
    <ligand>
        <name>ATP</name>
        <dbReference type="ChEBI" id="CHEBI:30616"/>
    </ligand>
</feature>
<feature type="binding site" evidence="1">
    <location>
        <position position="11"/>
    </location>
    <ligand>
        <name>substrate</name>
    </ligand>
</feature>
<feature type="binding site" evidence="1">
    <location>
        <position position="19"/>
    </location>
    <ligand>
        <name>ATP</name>
        <dbReference type="ChEBI" id="CHEBI:30616"/>
    </ligand>
</feature>
<feature type="binding site" evidence="1">
    <location>
        <position position="43"/>
    </location>
    <ligand>
        <name>substrate</name>
    </ligand>
</feature>
<feature type="binding site" evidence="1">
    <location>
        <position position="75"/>
    </location>
    <ligand>
        <name>substrate</name>
    </ligand>
</feature>
<feature type="binding site" evidence="1">
    <location>
        <position position="89"/>
    </location>
    <ligand>
        <name>substrate</name>
    </ligand>
</feature>
<feature type="binding site" evidence="1">
    <location>
        <begin position="90"/>
        <end position="92"/>
    </location>
    <ligand>
        <name>ATP</name>
        <dbReference type="ChEBI" id="CHEBI:30616"/>
    </ligand>
</feature>
<feature type="binding site" evidence="1">
    <location>
        <position position="100"/>
    </location>
    <ligand>
        <name>ATP</name>
        <dbReference type="ChEBI" id="CHEBI:30616"/>
    </ligand>
</feature>
<feature type="binding site" evidence="1">
    <location>
        <begin position="125"/>
        <end position="131"/>
    </location>
    <ligand>
        <name>ATP</name>
        <dbReference type="ChEBI" id="CHEBI:30616"/>
    </ligand>
</feature>
<feature type="site" description="Transition state stabilizer" evidence="1">
    <location>
        <position position="19"/>
    </location>
</feature>
<dbReference type="EC" id="2.7.7.3" evidence="1"/>
<dbReference type="EMBL" id="CP001392">
    <property type="protein sequence ID" value="ACM34273.1"/>
    <property type="molecule type" value="Genomic_DNA"/>
</dbReference>
<dbReference type="RefSeq" id="WP_011806614.1">
    <property type="nucleotide sequence ID" value="NC_011992.1"/>
</dbReference>
<dbReference type="SMR" id="B9MF03"/>
<dbReference type="GeneID" id="84684130"/>
<dbReference type="KEGG" id="dia:Dtpsy_2839"/>
<dbReference type="eggNOG" id="COG0669">
    <property type="taxonomic scope" value="Bacteria"/>
</dbReference>
<dbReference type="HOGENOM" id="CLU_100149_0_1_4"/>
<dbReference type="UniPathway" id="UPA00241">
    <property type="reaction ID" value="UER00355"/>
</dbReference>
<dbReference type="Proteomes" id="UP000000450">
    <property type="component" value="Chromosome"/>
</dbReference>
<dbReference type="GO" id="GO:0005737">
    <property type="term" value="C:cytoplasm"/>
    <property type="evidence" value="ECO:0007669"/>
    <property type="project" value="UniProtKB-SubCell"/>
</dbReference>
<dbReference type="GO" id="GO:0005524">
    <property type="term" value="F:ATP binding"/>
    <property type="evidence" value="ECO:0007669"/>
    <property type="project" value="UniProtKB-KW"/>
</dbReference>
<dbReference type="GO" id="GO:0004595">
    <property type="term" value="F:pantetheine-phosphate adenylyltransferase activity"/>
    <property type="evidence" value="ECO:0007669"/>
    <property type="project" value="UniProtKB-UniRule"/>
</dbReference>
<dbReference type="GO" id="GO:0015937">
    <property type="term" value="P:coenzyme A biosynthetic process"/>
    <property type="evidence" value="ECO:0007669"/>
    <property type="project" value="UniProtKB-UniRule"/>
</dbReference>
<dbReference type="CDD" id="cd02163">
    <property type="entry name" value="PPAT"/>
    <property type="match status" value="1"/>
</dbReference>
<dbReference type="Gene3D" id="3.40.50.620">
    <property type="entry name" value="HUPs"/>
    <property type="match status" value="1"/>
</dbReference>
<dbReference type="HAMAP" id="MF_00151">
    <property type="entry name" value="PPAT_bact"/>
    <property type="match status" value="1"/>
</dbReference>
<dbReference type="InterPro" id="IPR004821">
    <property type="entry name" value="Cyt_trans-like"/>
</dbReference>
<dbReference type="InterPro" id="IPR001980">
    <property type="entry name" value="PPAT"/>
</dbReference>
<dbReference type="InterPro" id="IPR014729">
    <property type="entry name" value="Rossmann-like_a/b/a_fold"/>
</dbReference>
<dbReference type="NCBIfam" id="TIGR01510">
    <property type="entry name" value="coaD_prev_kdtB"/>
    <property type="match status" value="1"/>
</dbReference>
<dbReference type="NCBIfam" id="TIGR00125">
    <property type="entry name" value="cyt_tran_rel"/>
    <property type="match status" value="1"/>
</dbReference>
<dbReference type="PANTHER" id="PTHR21342">
    <property type="entry name" value="PHOSPHOPANTETHEINE ADENYLYLTRANSFERASE"/>
    <property type="match status" value="1"/>
</dbReference>
<dbReference type="PANTHER" id="PTHR21342:SF1">
    <property type="entry name" value="PHOSPHOPANTETHEINE ADENYLYLTRANSFERASE"/>
    <property type="match status" value="1"/>
</dbReference>
<dbReference type="Pfam" id="PF01467">
    <property type="entry name" value="CTP_transf_like"/>
    <property type="match status" value="1"/>
</dbReference>
<dbReference type="PRINTS" id="PR01020">
    <property type="entry name" value="LPSBIOSNTHSS"/>
</dbReference>
<dbReference type="SUPFAM" id="SSF52374">
    <property type="entry name" value="Nucleotidylyl transferase"/>
    <property type="match status" value="1"/>
</dbReference>
<reference key="1">
    <citation type="submission" date="2009-01" db="EMBL/GenBank/DDBJ databases">
        <title>Complete sequence of Diaphorobacter sp. TPSY.</title>
        <authorList>
            <consortium name="US DOE Joint Genome Institute"/>
            <person name="Lucas S."/>
            <person name="Copeland A."/>
            <person name="Lapidus A."/>
            <person name="Glavina del Rio T."/>
            <person name="Tice H."/>
            <person name="Bruce D."/>
            <person name="Goodwin L."/>
            <person name="Pitluck S."/>
            <person name="Chertkov O."/>
            <person name="Brettin T."/>
            <person name="Detter J.C."/>
            <person name="Han C."/>
            <person name="Larimer F."/>
            <person name="Land M."/>
            <person name="Hauser L."/>
            <person name="Kyrpides N."/>
            <person name="Mikhailova N."/>
            <person name="Coates J.D."/>
        </authorList>
    </citation>
    <scope>NUCLEOTIDE SEQUENCE [LARGE SCALE GENOMIC DNA]</scope>
    <source>
        <strain>TPSY</strain>
    </source>
</reference>
<accession>B9MF03</accession>
<evidence type="ECO:0000255" key="1">
    <source>
        <dbReference type="HAMAP-Rule" id="MF_00151"/>
    </source>
</evidence>
<proteinExistence type="inferred from homology"/>
<organism>
    <name type="scientific">Acidovorax ebreus (strain TPSY)</name>
    <name type="common">Diaphorobacter sp. (strain TPSY)</name>
    <dbReference type="NCBI Taxonomy" id="535289"/>
    <lineage>
        <taxon>Bacteria</taxon>
        <taxon>Pseudomonadati</taxon>
        <taxon>Pseudomonadota</taxon>
        <taxon>Betaproteobacteria</taxon>
        <taxon>Burkholderiales</taxon>
        <taxon>Comamonadaceae</taxon>
        <taxon>Diaphorobacter</taxon>
    </lineage>
</organism>
<gene>
    <name evidence="1" type="primary">coaD</name>
    <name type="ordered locus">Dtpsy_2839</name>
</gene>
<sequence length="165" mass="18000">MAHVLAVYPGTFDPITLGHEDLVRRAARLFDRVIVAVAIAHHKKTLFSLDERMEMARQALADCPQVQVESFEGLVTEFTAARGGTAMVRGLRSGTDFDYEFQLAGMNRALVPGVETVFLTPASQYQFISSTLVREIGTLGGDVAQFVSPGVHERLLHKLGRTAAA</sequence>